<organism>
    <name type="scientific">Bartonella henselae (strain ATCC 49882 / DSM 28221 / CCUG 30454 / Houston 1)</name>
    <name type="common">Rochalimaea henselae</name>
    <dbReference type="NCBI Taxonomy" id="283166"/>
    <lineage>
        <taxon>Bacteria</taxon>
        <taxon>Pseudomonadati</taxon>
        <taxon>Pseudomonadota</taxon>
        <taxon>Alphaproteobacteria</taxon>
        <taxon>Hyphomicrobiales</taxon>
        <taxon>Bartonellaceae</taxon>
        <taxon>Bartonella</taxon>
    </lineage>
</organism>
<accession>Q6G3F1</accession>
<protein>
    <recommendedName>
        <fullName evidence="1">Putative pre-16S rRNA nuclease</fullName>
        <ecNumber evidence="1">3.1.-.-</ecNumber>
    </recommendedName>
</protein>
<gene>
    <name type="ordered locus">BH08220</name>
</gene>
<proteinExistence type="inferred from homology"/>
<name>YQGF_BARHE</name>
<feature type="chain" id="PRO_0000172025" description="Putative pre-16S rRNA nuclease">
    <location>
        <begin position="1"/>
        <end position="159"/>
    </location>
</feature>
<dbReference type="EC" id="3.1.-.-" evidence="1"/>
<dbReference type="EMBL" id="BX897699">
    <property type="protein sequence ID" value="CAF27621.1"/>
    <property type="molecule type" value="Genomic_DNA"/>
</dbReference>
<dbReference type="SMR" id="Q6G3F1"/>
<dbReference type="PaxDb" id="283166-BH08220"/>
<dbReference type="EnsemblBacteria" id="CAF27621">
    <property type="protein sequence ID" value="CAF27621"/>
    <property type="gene ID" value="BH08220"/>
</dbReference>
<dbReference type="KEGG" id="bhe:BH08220"/>
<dbReference type="eggNOG" id="COG0816">
    <property type="taxonomic scope" value="Bacteria"/>
</dbReference>
<dbReference type="OrthoDB" id="9796140at2"/>
<dbReference type="Proteomes" id="UP000000421">
    <property type="component" value="Chromosome"/>
</dbReference>
<dbReference type="GO" id="GO:0005829">
    <property type="term" value="C:cytosol"/>
    <property type="evidence" value="ECO:0007669"/>
    <property type="project" value="TreeGrafter"/>
</dbReference>
<dbReference type="GO" id="GO:0004518">
    <property type="term" value="F:nuclease activity"/>
    <property type="evidence" value="ECO:0007669"/>
    <property type="project" value="UniProtKB-KW"/>
</dbReference>
<dbReference type="GO" id="GO:0000967">
    <property type="term" value="P:rRNA 5'-end processing"/>
    <property type="evidence" value="ECO:0007669"/>
    <property type="project" value="UniProtKB-UniRule"/>
</dbReference>
<dbReference type="CDD" id="cd16964">
    <property type="entry name" value="YqgF"/>
    <property type="match status" value="1"/>
</dbReference>
<dbReference type="Gene3D" id="3.30.420.140">
    <property type="entry name" value="YqgF/RNase H-like domain"/>
    <property type="match status" value="1"/>
</dbReference>
<dbReference type="HAMAP" id="MF_00651">
    <property type="entry name" value="Nuclease_YqgF"/>
    <property type="match status" value="1"/>
</dbReference>
<dbReference type="InterPro" id="IPR012337">
    <property type="entry name" value="RNaseH-like_sf"/>
</dbReference>
<dbReference type="InterPro" id="IPR005227">
    <property type="entry name" value="YqgF"/>
</dbReference>
<dbReference type="InterPro" id="IPR006641">
    <property type="entry name" value="YqgF/RNaseH-like_dom"/>
</dbReference>
<dbReference type="InterPro" id="IPR037027">
    <property type="entry name" value="YqgF/RNaseH-like_dom_sf"/>
</dbReference>
<dbReference type="NCBIfam" id="TIGR00250">
    <property type="entry name" value="RNAse_H_YqgF"/>
    <property type="match status" value="1"/>
</dbReference>
<dbReference type="PANTHER" id="PTHR33317">
    <property type="entry name" value="POLYNUCLEOTIDYL TRANSFERASE, RIBONUCLEASE H-LIKE SUPERFAMILY PROTEIN"/>
    <property type="match status" value="1"/>
</dbReference>
<dbReference type="PANTHER" id="PTHR33317:SF4">
    <property type="entry name" value="POLYNUCLEOTIDYL TRANSFERASE, RIBONUCLEASE H-LIKE SUPERFAMILY PROTEIN"/>
    <property type="match status" value="1"/>
</dbReference>
<dbReference type="Pfam" id="PF03652">
    <property type="entry name" value="RuvX"/>
    <property type="match status" value="1"/>
</dbReference>
<dbReference type="SMART" id="SM00732">
    <property type="entry name" value="YqgFc"/>
    <property type="match status" value="1"/>
</dbReference>
<dbReference type="SUPFAM" id="SSF53098">
    <property type="entry name" value="Ribonuclease H-like"/>
    <property type="match status" value="1"/>
</dbReference>
<comment type="function">
    <text evidence="1">Could be a nuclease involved in processing of the 5'-end of pre-16S rRNA.</text>
</comment>
<comment type="subcellular location">
    <subcellularLocation>
        <location evidence="1">Cytoplasm</location>
    </subcellularLocation>
</comment>
<comment type="similarity">
    <text evidence="1">Belongs to the YqgF nuclease family.</text>
</comment>
<sequence length="159" mass="17557">MAIININEVMIHLLPGQIIAGLDLGTKTIGIAVSDRGLIFSNPRSVLQRQKFTVDAQTLIKIFDHENVGVIIIGLPLNMNGSSGPRAQATRTFVRNMEAYTEIPFVFWDERLSTIAAERSLLEMDVSRAKRATRIDSAAAAFILQGALNRIHNLHHIEG</sequence>
<evidence type="ECO:0000255" key="1">
    <source>
        <dbReference type="HAMAP-Rule" id="MF_00651"/>
    </source>
</evidence>
<reference key="1">
    <citation type="journal article" date="2004" name="Proc. Natl. Acad. Sci. U.S.A.">
        <title>The louse-borne human pathogen Bartonella quintana is a genomic derivative of the zoonotic agent Bartonella henselae.</title>
        <authorList>
            <person name="Alsmark U.C.M."/>
            <person name="Frank A.C."/>
            <person name="Karlberg E.O."/>
            <person name="Legault B.-A."/>
            <person name="Ardell D.H."/>
            <person name="Canbaeck B."/>
            <person name="Eriksson A.-S."/>
            <person name="Naeslund A.K."/>
            <person name="Handley S.A."/>
            <person name="Huvet M."/>
            <person name="La Scola B."/>
            <person name="Holmberg M."/>
            <person name="Andersson S.G.E."/>
        </authorList>
    </citation>
    <scope>NUCLEOTIDE SEQUENCE [LARGE SCALE GENOMIC DNA]</scope>
    <source>
        <strain>ATCC 49882 / DSM 28221 / CCUG 30454 / Houston 1</strain>
    </source>
</reference>
<keyword id="KW-0963">Cytoplasm</keyword>
<keyword id="KW-0378">Hydrolase</keyword>
<keyword id="KW-0540">Nuclease</keyword>
<keyword id="KW-0690">Ribosome biogenesis</keyword>